<accession>B4T869</accession>
<sequence>MTQLAIGEATPHGATYDGHGVNFTLFSAHAERVELCVFDSRGNERRYDLPGRRGDVWHGYLAGARPGLRYGYRVHGPWQPAQGHRFNPAKLLLDPYARRVEGELKDHPLLHGGHDEPDYRDNAAVAPKSVVISDHYDWEDDAAPRTPWGKTVIYEAHVKGLTYLHPELPQEIRGTYKALGHPVMVAYFKQLGITALELLPVAQFASEPRLQRMGLTNYWGYNPMAMFALHPAWASSPETALDEFRDAVKALHRAGIEVILDIVLNHSAELDLDGPTFSLRGIDNRSYYWIRDDGDYHNWTGCGNTLNLSHPGVVEYACECLRYWVETCHVDGFRFDLASVMGRTPTFRQDAPLFAAIKACPVLSTVKLIAEPWDIGEGGYQVGNFPPPFAEWNDHFRDAARRFWLPRNLTTGEFACRFAASSDVFKRNGRAPGASVNLLTAHDGFTLRDCVCFNQKHNEANGEENRDGTNSNYSDNHGKEGLGGPLDLMERRRDSIHALLATLLLSQGTPMLLAGDEHGHSQHGNNNAYCQDNALTWLDWQQANRGLTTFTAALIRLRQQIPALTGNSWWEEGDGNVRWLNKNAQPLSADEWQNGPKLMQILLSDRFLIAINATLEVTDIVLPEGEWRAVPPFAGEDNPVITAVWQGPAHGLCVFQRG</sequence>
<dbReference type="EC" id="3.2.1.196" evidence="1"/>
<dbReference type="EMBL" id="CP001120">
    <property type="protein sequence ID" value="ACF69705.1"/>
    <property type="molecule type" value="Genomic_DNA"/>
</dbReference>
<dbReference type="RefSeq" id="WP_000192491.1">
    <property type="nucleotide sequence ID" value="NC_011083.1"/>
</dbReference>
<dbReference type="SMR" id="B4T869"/>
<dbReference type="CAZy" id="CBM48">
    <property type="family name" value="Carbohydrate-Binding Module Family 48"/>
</dbReference>
<dbReference type="CAZy" id="GH13">
    <property type="family name" value="Glycoside Hydrolase Family 13"/>
</dbReference>
<dbReference type="KEGG" id="seh:SeHA_C3846"/>
<dbReference type="HOGENOM" id="CLU_011725_1_1_6"/>
<dbReference type="UniPathway" id="UPA00165"/>
<dbReference type="Proteomes" id="UP000001866">
    <property type="component" value="Chromosome"/>
</dbReference>
<dbReference type="GO" id="GO:0004133">
    <property type="term" value="F:glycogen debranching enzyme activity"/>
    <property type="evidence" value="ECO:0007669"/>
    <property type="project" value="UniProtKB-UniRule"/>
</dbReference>
<dbReference type="GO" id="GO:0004553">
    <property type="term" value="F:hydrolase activity, hydrolyzing O-glycosyl compounds"/>
    <property type="evidence" value="ECO:0007669"/>
    <property type="project" value="InterPro"/>
</dbReference>
<dbReference type="GO" id="GO:0005980">
    <property type="term" value="P:glycogen catabolic process"/>
    <property type="evidence" value="ECO:0007669"/>
    <property type="project" value="UniProtKB-UniRule"/>
</dbReference>
<dbReference type="CDD" id="cd11326">
    <property type="entry name" value="AmyAc_Glg_debranch"/>
    <property type="match status" value="1"/>
</dbReference>
<dbReference type="CDD" id="cd02856">
    <property type="entry name" value="E_set_GDE_Isoamylase_N"/>
    <property type="match status" value="1"/>
</dbReference>
<dbReference type="FunFam" id="2.60.40.10:FF:000468">
    <property type="entry name" value="Glycogen debranching enzyme"/>
    <property type="match status" value="1"/>
</dbReference>
<dbReference type="Gene3D" id="3.20.20.80">
    <property type="entry name" value="Glycosidases"/>
    <property type="match status" value="1"/>
</dbReference>
<dbReference type="Gene3D" id="2.60.40.1180">
    <property type="entry name" value="Golgi alpha-mannosidase II"/>
    <property type="match status" value="1"/>
</dbReference>
<dbReference type="Gene3D" id="2.60.40.10">
    <property type="entry name" value="Immunoglobulins"/>
    <property type="match status" value="1"/>
</dbReference>
<dbReference type="HAMAP" id="MF_01248">
    <property type="entry name" value="GlgX"/>
    <property type="match status" value="1"/>
</dbReference>
<dbReference type="InterPro" id="IPR040784">
    <property type="entry name" value="GlgX_C"/>
</dbReference>
<dbReference type="InterPro" id="IPR044505">
    <property type="entry name" value="GlgX_Isoamylase_N_E_set"/>
</dbReference>
<dbReference type="InterPro" id="IPR006047">
    <property type="entry name" value="Glyco_hydro_13_cat_dom"/>
</dbReference>
<dbReference type="InterPro" id="IPR004193">
    <property type="entry name" value="Glyco_hydro_13_N"/>
</dbReference>
<dbReference type="InterPro" id="IPR013780">
    <property type="entry name" value="Glyco_hydro_b"/>
</dbReference>
<dbReference type="InterPro" id="IPR022844">
    <property type="entry name" value="Glycogen_debranch_bac"/>
</dbReference>
<dbReference type="InterPro" id="IPR011837">
    <property type="entry name" value="Glycogen_debranch_GlgX"/>
</dbReference>
<dbReference type="InterPro" id="IPR017853">
    <property type="entry name" value="Glycoside_hydrolase_SF"/>
</dbReference>
<dbReference type="InterPro" id="IPR013783">
    <property type="entry name" value="Ig-like_fold"/>
</dbReference>
<dbReference type="InterPro" id="IPR014756">
    <property type="entry name" value="Ig_E-set"/>
</dbReference>
<dbReference type="NCBIfam" id="TIGR02100">
    <property type="entry name" value="glgX_debranch"/>
    <property type="match status" value="1"/>
</dbReference>
<dbReference type="NCBIfam" id="NF002983">
    <property type="entry name" value="PRK03705.1"/>
    <property type="match status" value="1"/>
</dbReference>
<dbReference type="PANTHER" id="PTHR43002">
    <property type="entry name" value="GLYCOGEN DEBRANCHING ENZYME"/>
    <property type="match status" value="1"/>
</dbReference>
<dbReference type="Pfam" id="PF00128">
    <property type="entry name" value="Alpha-amylase"/>
    <property type="match status" value="1"/>
</dbReference>
<dbReference type="Pfam" id="PF02922">
    <property type="entry name" value="CBM_48"/>
    <property type="match status" value="1"/>
</dbReference>
<dbReference type="Pfam" id="PF18390">
    <property type="entry name" value="GlgX_C"/>
    <property type="match status" value="1"/>
</dbReference>
<dbReference type="SMART" id="SM00642">
    <property type="entry name" value="Aamy"/>
    <property type="match status" value="1"/>
</dbReference>
<dbReference type="SUPFAM" id="SSF51445">
    <property type="entry name" value="(Trans)glycosidases"/>
    <property type="match status" value="1"/>
</dbReference>
<dbReference type="SUPFAM" id="SSF81296">
    <property type="entry name" value="E set domains"/>
    <property type="match status" value="1"/>
</dbReference>
<gene>
    <name evidence="1" type="primary">glgX</name>
    <name type="ordered locus">SeHA_C3846</name>
</gene>
<organism>
    <name type="scientific">Salmonella heidelberg (strain SL476)</name>
    <dbReference type="NCBI Taxonomy" id="454169"/>
    <lineage>
        <taxon>Bacteria</taxon>
        <taxon>Pseudomonadati</taxon>
        <taxon>Pseudomonadota</taxon>
        <taxon>Gammaproteobacteria</taxon>
        <taxon>Enterobacterales</taxon>
        <taxon>Enterobacteriaceae</taxon>
        <taxon>Salmonella</taxon>
    </lineage>
</organism>
<protein>
    <recommendedName>
        <fullName evidence="1">Glycogen debranching enzyme</fullName>
        <ecNumber evidence="1">3.2.1.196</ecNumber>
    </recommendedName>
    <alternativeName>
        <fullName evidence="1">Limit dextrin alpha-1,6-maltotetraose-hydrolase</fullName>
    </alternativeName>
</protein>
<evidence type="ECO:0000255" key="1">
    <source>
        <dbReference type="HAMAP-Rule" id="MF_01248"/>
    </source>
</evidence>
<evidence type="ECO:0000256" key="2">
    <source>
        <dbReference type="SAM" id="MobiDB-lite"/>
    </source>
</evidence>
<feature type="chain" id="PRO_1000139876" description="Glycogen debranching enzyme">
    <location>
        <begin position="1"/>
        <end position="658"/>
    </location>
</feature>
<feature type="region of interest" description="Disordered" evidence="2">
    <location>
        <begin position="459"/>
        <end position="484"/>
    </location>
</feature>
<feature type="active site" description="Nucleophile" evidence="1">
    <location>
        <position position="336"/>
    </location>
</feature>
<feature type="active site" description="Proton donor" evidence="1">
    <location>
        <position position="371"/>
    </location>
</feature>
<feature type="site" description="Transition state stabilizer" evidence="1">
    <location>
        <position position="443"/>
    </location>
</feature>
<proteinExistence type="inferred from homology"/>
<comment type="function">
    <text evidence="1">Removes maltotriose and maltotetraose chains that are attached by 1,6-alpha-linkage to the limit dextrin main chain, generating a debranched limit dextrin.</text>
</comment>
<comment type="catalytic activity">
    <reaction evidence="1">
        <text>Hydrolysis of (1-&gt;6)-alpha-D-glucosidic linkages to branches with degrees of polymerization of three or four glucose residues in limit dextrin.</text>
        <dbReference type="EC" id="3.2.1.196"/>
    </reaction>
</comment>
<comment type="pathway">
    <text evidence="1">Glycan degradation; glycogen degradation.</text>
</comment>
<comment type="similarity">
    <text evidence="1">Belongs to the glycosyl hydrolase 13 family.</text>
</comment>
<reference key="1">
    <citation type="journal article" date="2011" name="J. Bacteriol.">
        <title>Comparative genomics of 28 Salmonella enterica isolates: evidence for CRISPR-mediated adaptive sublineage evolution.</title>
        <authorList>
            <person name="Fricke W.F."/>
            <person name="Mammel M.K."/>
            <person name="McDermott P.F."/>
            <person name="Tartera C."/>
            <person name="White D.G."/>
            <person name="Leclerc J.E."/>
            <person name="Ravel J."/>
            <person name="Cebula T.A."/>
        </authorList>
    </citation>
    <scope>NUCLEOTIDE SEQUENCE [LARGE SCALE GENOMIC DNA]</scope>
    <source>
        <strain>SL476</strain>
    </source>
</reference>
<name>GLGX_SALHS</name>
<keyword id="KW-0119">Carbohydrate metabolism</keyword>
<keyword id="KW-0321">Glycogen metabolism</keyword>
<keyword id="KW-0326">Glycosidase</keyword>
<keyword id="KW-0378">Hydrolase</keyword>